<feature type="chain" id="PRO_0000336182" description="UPF0102 protein GSU0650">
    <location>
        <begin position="1"/>
        <end position="128"/>
    </location>
</feature>
<dbReference type="EMBL" id="AE017180">
    <property type="protein sequence ID" value="AAR33980.1"/>
    <property type="molecule type" value="Genomic_DNA"/>
</dbReference>
<dbReference type="RefSeq" id="NP_951707.1">
    <property type="nucleotide sequence ID" value="NC_002939.5"/>
</dbReference>
<dbReference type="RefSeq" id="WP_010941311.1">
    <property type="nucleotide sequence ID" value="NC_002939.5"/>
</dbReference>
<dbReference type="SMR" id="Q74FF9"/>
<dbReference type="FunCoup" id="Q74FF9">
    <property type="interactions" value="287"/>
</dbReference>
<dbReference type="STRING" id="243231.GSU0650"/>
<dbReference type="EnsemblBacteria" id="AAR33980">
    <property type="protein sequence ID" value="AAR33980"/>
    <property type="gene ID" value="GSU0650"/>
</dbReference>
<dbReference type="KEGG" id="gsu:GSU0650"/>
<dbReference type="PATRIC" id="fig|243231.5.peg.646"/>
<dbReference type="eggNOG" id="COG0792">
    <property type="taxonomic scope" value="Bacteria"/>
</dbReference>
<dbReference type="HOGENOM" id="CLU_115353_2_3_7"/>
<dbReference type="InParanoid" id="Q74FF9"/>
<dbReference type="OrthoDB" id="9794876at2"/>
<dbReference type="Proteomes" id="UP000000577">
    <property type="component" value="Chromosome"/>
</dbReference>
<dbReference type="GO" id="GO:0003676">
    <property type="term" value="F:nucleic acid binding"/>
    <property type="evidence" value="ECO:0007669"/>
    <property type="project" value="InterPro"/>
</dbReference>
<dbReference type="CDD" id="cd20736">
    <property type="entry name" value="PoNe_Nuclease"/>
    <property type="match status" value="1"/>
</dbReference>
<dbReference type="Gene3D" id="3.40.1350.10">
    <property type="match status" value="1"/>
</dbReference>
<dbReference type="HAMAP" id="MF_00048">
    <property type="entry name" value="UPF0102"/>
    <property type="match status" value="1"/>
</dbReference>
<dbReference type="InterPro" id="IPR011335">
    <property type="entry name" value="Restrct_endonuc-II-like"/>
</dbReference>
<dbReference type="InterPro" id="IPR011856">
    <property type="entry name" value="tRNA_endonuc-like_dom_sf"/>
</dbReference>
<dbReference type="InterPro" id="IPR003509">
    <property type="entry name" value="UPF0102_YraN-like"/>
</dbReference>
<dbReference type="NCBIfam" id="NF009150">
    <property type="entry name" value="PRK12497.1-3"/>
    <property type="match status" value="1"/>
</dbReference>
<dbReference type="NCBIfam" id="NF009154">
    <property type="entry name" value="PRK12497.3-3"/>
    <property type="match status" value="1"/>
</dbReference>
<dbReference type="NCBIfam" id="NF011268">
    <property type="entry name" value="PRK14675.1"/>
    <property type="match status" value="1"/>
</dbReference>
<dbReference type="NCBIfam" id="TIGR00252">
    <property type="entry name" value="YraN family protein"/>
    <property type="match status" value="1"/>
</dbReference>
<dbReference type="PANTHER" id="PTHR34039">
    <property type="entry name" value="UPF0102 PROTEIN YRAN"/>
    <property type="match status" value="1"/>
</dbReference>
<dbReference type="PANTHER" id="PTHR34039:SF1">
    <property type="entry name" value="UPF0102 PROTEIN YRAN"/>
    <property type="match status" value="1"/>
</dbReference>
<dbReference type="Pfam" id="PF02021">
    <property type="entry name" value="UPF0102"/>
    <property type="match status" value="1"/>
</dbReference>
<dbReference type="SUPFAM" id="SSF52980">
    <property type="entry name" value="Restriction endonuclease-like"/>
    <property type="match status" value="1"/>
</dbReference>
<name>Y650_GEOSL</name>
<comment type="similarity">
    <text evidence="1">Belongs to the UPF0102 family.</text>
</comment>
<reference key="1">
    <citation type="journal article" date="2003" name="Science">
        <title>Genome of Geobacter sulfurreducens: metal reduction in subsurface environments.</title>
        <authorList>
            <person name="Methe B.A."/>
            <person name="Nelson K.E."/>
            <person name="Eisen J.A."/>
            <person name="Paulsen I.T."/>
            <person name="Nelson W.C."/>
            <person name="Heidelberg J.F."/>
            <person name="Wu D."/>
            <person name="Wu M."/>
            <person name="Ward N.L."/>
            <person name="Beanan M.J."/>
            <person name="Dodson R.J."/>
            <person name="Madupu R."/>
            <person name="Brinkac L.M."/>
            <person name="Daugherty S.C."/>
            <person name="DeBoy R.T."/>
            <person name="Durkin A.S."/>
            <person name="Gwinn M.L."/>
            <person name="Kolonay J.F."/>
            <person name="Sullivan S.A."/>
            <person name="Haft D.H."/>
            <person name="Selengut J."/>
            <person name="Davidsen T.M."/>
            <person name="Zafar N."/>
            <person name="White O."/>
            <person name="Tran B."/>
            <person name="Romero C."/>
            <person name="Forberger H.A."/>
            <person name="Weidman J.F."/>
            <person name="Khouri H.M."/>
            <person name="Feldblyum T.V."/>
            <person name="Utterback T.R."/>
            <person name="Van Aken S.E."/>
            <person name="Lovley D.R."/>
            <person name="Fraser C.M."/>
        </authorList>
    </citation>
    <scope>NUCLEOTIDE SEQUENCE [LARGE SCALE GENOMIC DNA]</scope>
    <source>
        <strain>ATCC 51573 / DSM 12127 / PCA</strain>
    </source>
</reference>
<accession>Q74FF9</accession>
<sequence>MPVGEGSHHNKILGVRGEDLAAAYLERLRYRIIDRNFRCRGGEVDIVARDGKTLVFVEVKTRRTAGYGVPQLAVTPFKQRQISKAALAWLTRKGMLDVNARFDVIAITILSPDAPRIEHITNAFELAY</sequence>
<organism>
    <name type="scientific">Geobacter sulfurreducens (strain ATCC 51573 / DSM 12127 / PCA)</name>
    <dbReference type="NCBI Taxonomy" id="243231"/>
    <lineage>
        <taxon>Bacteria</taxon>
        <taxon>Pseudomonadati</taxon>
        <taxon>Thermodesulfobacteriota</taxon>
        <taxon>Desulfuromonadia</taxon>
        <taxon>Geobacterales</taxon>
        <taxon>Geobacteraceae</taxon>
        <taxon>Geobacter</taxon>
    </lineage>
</organism>
<protein>
    <recommendedName>
        <fullName evidence="1">UPF0102 protein GSU0650</fullName>
    </recommendedName>
</protein>
<proteinExistence type="inferred from homology"/>
<gene>
    <name type="ordered locus">GSU0650</name>
</gene>
<evidence type="ECO:0000255" key="1">
    <source>
        <dbReference type="HAMAP-Rule" id="MF_00048"/>
    </source>
</evidence>
<keyword id="KW-1185">Reference proteome</keyword>